<sequence>MVFDAVGNPQTILLLGGTSEIGLAICERYLRNASARIVLAVMPGDPGRDAAVEQMRKAGASAVDVVDFDALDTESHPAVIDQAFAGGDVDVAIVAFGLLGDAEELWQNQRKAVQIAGVNYTAAVSVGVLLGEKMRAQGSGQIIAMSSAAGERVRRSNFVYGSTKAGLDGFYLGLGEALREFGVRVLVIRPGQVRTRMSAHVKEAPLTVDKEYVAELAVTASAKGKELVWAPGAFRYVMMVLRHIPRPIFRKLPI</sequence>
<evidence type="ECO:0000250" key="1">
    <source>
        <dbReference type="UniProtKB" id="P00334"/>
    </source>
</evidence>
<evidence type="ECO:0000250" key="2">
    <source>
        <dbReference type="UniProtKB" id="P9WGS9"/>
    </source>
</evidence>
<evidence type="ECO:0000255" key="3">
    <source>
        <dbReference type="PROSITE-ProRule" id="PRU10001"/>
    </source>
</evidence>
<evidence type="ECO:0000269" key="4">
    <source>
    </source>
</evidence>
<evidence type="ECO:0000303" key="5">
    <source>
    </source>
</evidence>
<evidence type="ECO:0000305" key="6"/>
<evidence type="ECO:0000305" key="7">
    <source>
    </source>
</evidence>
<proteinExistence type="evidence at protein level"/>
<gene>
    <name evidence="5" type="primary">dprE2</name>
    <name type="ordered locus">MSMEG_6385</name>
    <name type="ordered locus">MSMEI_6217</name>
    <name type="ORF">LJ00_31560</name>
</gene>
<protein>
    <recommendedName>
        <fullName evidence="6">Decaprenylphosphoryl-2-keto-beta-D-erythro-pentose reductase</fullName>
        <ecNumber evidence="4">1.1.1.333</ecNumber>
    </recommendedName>
    <alternativeName>
        <fullName evidence="6">Decaprenyl-phospho-2'-keto-D-arabinose reductase</fullName>
    </alternativeName>
    <alternativeName>
        <fullName evidence="6">Decaprenylphospho-beta-D-erythro-pentofuranosid-2-ulose 2-reductase</fullName>
    </alternativeName>
    <alternativeName>
        <fullName evidence="6">Decaprenylphosphoryl-beta-D-ribofuranose 2'-epimerase subunit DprE2</fullName>
        <shortName evidence="6">Decaprenyl-phosphoribose 2'-epimerase subunit 2</shortName>
    </alternativeName>
    <alternativeName>
        <fullName evidence="5">NAD-dependent decaprenylphosphoryl-D-2'-keto erythropentose reductase</fullName>
    </alternativeName>
</protein>
<accession>A0R610</accession>
<comment type="function">
    <text evidence="2 4">Component of the DprE1-DprE2 complex that catalyzes the 2-step epimerization of decaprenyl-phospho-ribose (DPR) to decaprenyl-phospho-arabinose (DPA), a key precursor that serves as the arabinose donor required for the synthesis of cell-wall arabinans. DprE1 catalyzes the first step of epimerization, namely FAD-dependent oxidation of the C2' hydroxyl of DPR to yield the keto intermediate decaprenyl-phospho-2'-keto-D-arabinose (DPX) (PubMed:22188377). The intermediate DPX is then transferred to DprE2 subunit of the epimerase complex, most probably through a 'substrate channel' at the interface of DprE1-DprE2 complex (By similarity). DprE2 then catalyzes the second step of epimerization, the NAD(+)-dependent reduction of DPX that leads to the formation of DPA (PubMed:22188377).</text>
</comment>
<comment type="catalytic activity">
    <reaction evidence="4">
        <text>trans,octa-cis-decaprenylphospho-beta-D-arabinofuranose + NAD(+) = trans,octa-cis-decaprenylphospho-beta-D-erythro-pentofuranosid-2-ulose + NADH + H(+)</text>
        <dbReference type="Rhea" id="RHEA:33895"/>
        <dbReference type="ChEBI" id="CHEBI:15378"/>
        <dbReference type="ChEBI" id="CHEBI:57540"/>
        <dbReference type="ChEBI" id="CHEBI:57945"/>
        <dbReference type="ChEBI" id="CHEBI:65066"/>
        <dbReference type="ChEBI" id="CHEBI:65067"/>
        <dbReference type="EC" id="1.1.1.333"/>
    </reaction>
</comment>
<comment type="pathway">
    <text evidence="7">Cell wall biogenesis; cell wall polysaccharide biosynthesis.</text>
</comment>
<comment type="subunit">
    <text evidence="2">Interacts with DprE1 to form an epimerase complex.</text>
</comment>
<comment type="subcellular location">
    <subcellularLocation>
        <location evidence="2">Periplasm</location>
    </subcellularLocation>
</comment>
<comment type="similarity">
    <text evidence="6">Belongs to the short-chain dehydrogenases/reductases (SDR) family.</text>
</comment>
<reference key="1">
    <citation type="submission" date="2006-10" db="EMBL/GenBank/DDBJ databases">
        <authorList>
            <person name="Fleischmann R.D."/>
            <person name="Dodson R.J."/>
            <person name="Haft D.H."/>
            <person name="Merkel J.S."/>
            <person name="Nelson W.C."/>
            <person name="Fraser C.M."/>
        </authorList>
    </citation>
    <scope>NUCLEOTIDE SEQUENCE [LARGE SCALE GENOMIC DNA]</scope>
    <source>
        <strain>ATCC 700084 / mc(2)155</strain>
    </source>
</reference>
<reference key="2">
    <citation type="journal article" date="2007" name="Genome Biol.">
        <title>Interrupted coding sequences in Mycobacterium smegmatis: authentic mutations or sequencing errors?</title>
        <authorList>
            <person name="Deshayes C."/>
            <person name="Perrodou E."/>
            <person name="Gallien S."/>
            <person name="Euphrasie D."/>
            <person name="Schaeffer C."/>
            <person name="Van-Dorsselaer A."/>
            <person name="Poch O."/>
            <person name="Lecompte O."/>
            <person name="Reyrat J.-M."/>
        </authorList>
    </citation>
    <scope>NUCLEOTIDE SEQUENCE [LARGE SCALE GENOMIC DNA]</scope>
    <source>
        <strain>ATCC 700084 / mc(2)155</strain>
    </source>
</reference>
<reference key="3">
    <citation type="journal article" date="2009" name="Genome Res.">
        <title>Ortho-proteogenomics: multiple proteomes investigation through orthology and a new MS-based protocol.</title>
        <authorList>
            <person name="Gallien S."/>
            <person name="Perrodou E."/>
            <person name="Carapito C."/>
            <person name="Deshayes C."/>
            <person name="Reyrat J.-M."/>
            <person name="Van Dorsselaer A."/>
            <person name="Poch O."/>
            <person name="Schaeffer C."/>
            <person name="Lecompte O."/>
        </authorList>
    </citation>
    <scope>NUCLEOTIDE SEQUENCE [LARGE SCALE GENOMIC DNA]</scope>
    <source>
        <strain>ATCC 700084 / mc(2)155</strain>
    </source>
</reference>
<reference key="4">
    <citation type="journal article" date="2015" name="Genome Announc.">
        <title>Complete genome sequences of a Mycobacterium smegmatis laboratory strain (MC2 155) and isoniazid-resistant (4XR1/R2) mutant strains.</title>
        <authorList>
            <person name="Mohan A."/>
            <person name="Padiadpu J."/>
            <person name="Baloni P."/>
            <person name="Chandra N."/>
        </authorList>
    </citation>
    <scope>NUCLEOTIDE SEQUENCE [LARGE SCALE GENOMIC DNA]</scope>
    <source>
        <strain>ATCC 700084 / mc(2)155</strain>
    </source>
</reference>
<reference key="5">
    <citation type="journal article" date="2012" name="J. Am. Chem. Soc.">
        <title>Benzothiazinones are suicide inhibitors of mycobacterial decaprenylphosphoryl-beta-D-ribofuranose 2'-oxidase DprE1.</title>
        <authorList>
            <person name="Trefzer C."/>
            <person name="Skovierova H."/>
            <person name="Buroni S."/>
            <person name="Bobovska A."/>
            <person name="Nenci S."/>
            <person name="Molteni E."/>
            <person name="Pojer F."/>
            <person name="Pasca M.R."/>
            <person name="Makarov V."/>
            <person name="Cole S.T."/>
            <person name="Riccardi G."/>
            <person name="Mikusova K."/>
            <person name="Johnsson K."/>
        </authorList>
    </citation>
    <scope>FUNCTION</scope>
    <scope>CATALYTIC ACTIVITY</scope>
    <scope>PATHWAY</scope>
    <source>
        <strain>ATCC 700084 / mc(2)155</strain>
    </source>
</reference>
<organism>
    <name type="scientific">Mycolicibacterium smegmatis (strain ATCC 700084 / mc(2)155)</name>
    <name type="common">Mycobacterium smegmatis</name>
    <dbReference type="NCBI Taxonomy" id="246196"/>
    <lineage>
        <taxon>Bacteria</taxon>
        <taxon>Bacillati</taxon>
        <taxon>Actinomycetota</taxon>
        <taxon>Actinomycetes</taxon>
        <taxon>Mycobacteriales</taxon>
        <taxon>Mycobacteriaceae</taxon>
        <taxon>Mycolicibacterium</taxon>
    </lineage>
</organism>
<keyword id="KW-0961">Cell wall biogenesis/degradation</keyword>
<keyword id="KW-0520">NAD</keyword>
<keyword id="KW-0560">Oxidoreductase</keyword>
<keyword id="KW-0574">Periplasm</keyword>
<keyword id="KW-1185">Reference proteome</keyword>
<name>DPRE2_MYCS2</name>
<dbReference type="EC" id="1.1.1.333" evidence="4"/>
<dbReference type="EMBL" id="CP000480">
    <property type="protein sequence ID" value="ABK72059.1"/>
    <property type="molecule type" value="Genomic_DNA"/>
</dbReference>
<dbReference type="EMBL" id="CP001663">
    <property type="protein sequence ID" value="AFP42643.1"/>
    <property type="molecule type" value="Genomic_DNA"/>
</dbReference>
<dbReference type="EMBL" id="CP009494">
    <property type="protein sequence ID" value="AIU11366.1"/>
    <property type="molecule type" value="Genomic_DNA"/>
</dbReference>
<dbReference type="RefSeq" id="WP_011731251.1">
    <property type="nucleotide sequence ID" value="NZ_SIJM01000013.1"/>
</dbReference>
<dbReference type="RefSeq" id="YP_890598.1">
    <property type="nucleotide sequence ID" value="NC_008596.1"/>
</dbReference>
<dbReference type="SMR" id="A0R610"/>
<dbReference type="STRING" id="246196.MSMEG_6385"/>
<dbReference type="PaxDb" id="246196-MSMEI_6217"/>
<dbReference type="KEGG" id="msb:LJ00_31560"/>
<dbReference type="KEGG" id="msg:MSMEI_6217"/>
<dbReference type="KEGG" id="msm:MSMEG_6385"/>
<dbReference type="PATRIC" id="fig|246196.19.peg.6212"/>
<dbReference type="eggNOG" id="COG1028">
    <property type="taxonomic scope" value="Bacteria"/>
</dbReference>
<dbReference type="HOGENOM" id="CLU_010194_2_1_11"/>
<dbReference type="OrthoDB" id="5115951at2"/>
<dbReference type="BioCyc" id="MetaCyc:MONOMER-17533"/>
<dbReference type="BRENDA" id="1.1.1.333">
    <property type="organism ID" value="3512"/>
</dbReference>
<dbReference type="UniPathway" id="UPA00963"/>
<dbReference type="Proteomes" id="UP000000757">
    <property type="component" value="Chromosome"/>
</dbReference>
<dbReference type="Proteomes" id="UP000006158">
    <property type="component" value="Chromosome"/>
</dbReference>
<dbReference type="GO" id="GO:0042597">
    <property type="term" value="C:periplasmic space"/>
    <property type="evidence" value="ECO:0007669"/>
    <property type="project" value="UniProtKB-SubCell"/>
</dbReference>
<dbReference type="GO" id="GO:0016491">
    <property type="term" value="F:oxidoreductase activity"/>
    <property type="evidence" value="ECO:0007669"/>
    <property type="project" value="UniProtKB-KW"/>
</dbReference>
<dbReference type="GO" id="GO:0045227">
    <property type="term" value="P:capsule polysaccharide biosynthetic process"/>
    <property type="evidence" value="ECO:0007669"/>
    <property type="project" value="UniProtKB-UniPathway"/>
</dbReference>
<dbReference type="GO" id="GO:0071555">
    <property type="term" value="P:cell wall organization"/>
    <property type="evidence" value="ECO:0007669"/>
    <property type="project" value="UniProtKB-KW"/>
</dbReference>
<dbReference type="Gene3D" id="3.40.50.720">
    <property type="entry name" value="NAD(P)-binding Rossmann-like Domain"/>
    <property type="match status" value="1"/>
</dbReference>
<dbReference type="InterPro" id="IPR036291">
    <property type="entry name" value="NAD(P)-bd_dom_sf"/>
</dbReference>
<dbReference type="InterPro" id="IPR020904">
    <property type="entry name" value="Sc_DH/Rdtase_CS"/>
</dbReference>
<dbReference type="InterPro" id="IPR002347">
    <property type="entry name" value="SDR_fam"/>
</dbReference>
<dbReference type="NCBIfam" id="NF005912">
    <property type="entry name" value="PRK07904.1"/>
    <property type="match status" value="1"/>
</dbReference>
<dbReference type="PANTHER" id="PTHR43669">
    <property type="entry name" value="5-KETO-D-GLUCONATE 5-REDUCTASE"/>
    <property type="match status" value="1"/>
</dbReference>
<dbReference type="PANTHER" id="PTHR43669:SF6">
    <property type="entry name" value="DECAPRENYLPHOSPHORYL-2-KETO-BETA-D-ERYTHRO-PENTOSE REDUCTASE"/>
    <property type="match status" value="1"/>
</dbReference>
<dbReference type="Pfam" id="PF00106">
    <property type="entry name" value="adh_short"/>
    <property type="match status" value="1"/>
</dbReference>
<dbReference type="PRINTS" id="PR00081">
    <property type="entry name" value="GDHRDH"/>
</dbReference>
<dbReference type="SUPFAM" id="SSF51735">
    <property type="entry name" value="NAD(P)-binding Rossmann-fold domains"/>
    <property type="match status" value="1"/>
</dbReference>
<dbReference type="PROSITE" id="PS00061">
    <property type="entry name" value="ADH_SHORT"/>
    <property type="match status" value="1"/>
</dbReference>
<feature type="chain" id="PRO_0000432472" description="Decaprenylphosphoryl-2-keto-beta-D-erythro-pentose reductase">
    <location>
        <begin position="1"/>
        <end position="254"/>
    </location>
</feature>
<feature type="active site" description="Proton acceptor" evidence="3">
    <location>
        <position position="160"/>
    </location>
</feature>
<feature type="binding site" evidence="1">
    <location>
        <position position="67"/>
    </location>
    <ligand>
        <name>NAD(+)</name>
        <dbReference type="ChEBI" id="CHEBI:57540"/>
    </ligand>
</feature>
<feature type="binding site" evidence="1">
    <location>
        <position position="164"/>
    </location>
    <ligand>
        <name>NAD(+)</name>
        <dbReference type="ChEBI" id="CHEBI:57540"/>
    </ligand>
</feature>